<name>1106L_ASFL5</name>
<evidence type="ECO:0000250" key="1">
    <source>
        <dbReference type="UniProtKB" id="P68744"/>
    </source>
</evidence>
<evidence type="ECO:0000255" key="2"/>
<evidence type="ECO:0000255" key="3">
    <source>
        <dbReference type="PROSITE-ProRule" id="PRU10138"/>
    </source>
</evidence>
<evidence type="ECO:0000305" key="4"/>
<organismHost>
    <name type="scientific">Ornithodoros</name>
    <name type="common">relapsing fever ticks</name>
    <dbReference type="NCBI Taxonomy" id="6937"/>
</organismHost>
<organismHost>
    <name type="scientific">Sus scrofa</name>
    <name type="common">Pig</name>
    <dbReference type="NCBI Taxonomy" id="9823"/>
</organismHost>
<feature type="signal peptide" evidence="2">
    <location>
        <begin position="1"/>
        <end position="18"/>
    </location>
</feature>
<feature type="chain" id="PRO_0000036734" description="Protein MGF 110-6L">
    <location>
        <begin position="19"/>
        <end position="118"/>
    </location>
</feature>
<feature type="short sequence motif" description="Prevents secretion from ER" evidence="3">
    <location>
        <begin position="115"/>
        <end position="118"/>
    </location>
</feature>
<feature type="glycosylation site" description="N-linked (GlcNAc...) asparagine; by host" evidence="2">
    <location>
        <position position="96"/>
    </location>
</feature>
<reference key="1">
    <citation type="journal article" date="1990" name="Virology">
        <title>Genetic variation and multigene families in African swine fever virus.</title>
        <authorList>
            <person name="de la Vega I."/>
            <person name="Vinuela E."/>
            <person name="Blasco R."/>
        </authorList>
    </citation>
    <scope>NUCLEOTIDE SEQUENCE [GENOMIC DNA]</scope>
</reference>
<sequence length="118" mass="13944">MLVIFLGILGLLASQVSSQLVGQLRPTEDPPEEELEYWCAYMESCQFCWDCQDGTCINKIDGSAIYKNEYVKACLVSRWLDKCMYDLDKGIYHTMNCSQPWSWNPYKYFRKEWKKDEL</sequence>
<protein>
    <recommendedName>
        <fullName>Protein MGF 110-6L</fullName>
    </recommendedName>
</protein>
<organism>
    <name type="scientific">African swine fever virus (isolate Portugal/Lis 57/1957)</name>
    <name type="common">ASFV</name>
    <dbReference type="NCBI Taxonomy" id="10499"/>
    <lineage>
        <taxon>Viruses</taxon>
        <taxon>Varidnaviria</taxon>
        <taxon>Bamfordvirae</taxon>
        <taxon>Nucleocytoviricota</taxon>
        <taxon>Pokkesviricetes</taxon>
        <taxon>Asfuvirales</taxon>
        <taxon>Asfarviridae</taxon>
        <taxon>Asfivirus</taxon>
        <taxon>African swine fever virus</taxon>
    </lineage>
</organism>
<proteinExistence type="inferred from homology"/>
<gene>
    <name type="ORF">V118</name>
</gene>
<comment type="subcellular location">
    <subcellularLocation>
        <location evidence="1">Host endoplasmic reticulum lumen</location>
    </subcellularLocation>
</comment>
<comment type="induction">
    <text evidence="4">Expressed in the early phase of the viral replicative cycle.</text>
</comment>
<comment type="PTM">
    <text evidence="1">N-glycosylated.</text>
</comment>
<comment type="similarity">
    <text evidence="4">Belongs to the asfivirus MGF 110 family.</text>
</comment>
<accession>P68745</accession>
<accession>P18556</accession>
<keyword id="KW-0244">Early protein</keyword>
<keyword id="KW-0325">Glycoprotein</keyword>
<keyword id="KW-1038">Host endoplasmic reticulum</keyword>
<keyword id="KW-0732">Signal</keyword>
<dbReference type="EMBL" id="M58155">
    <property type="protein sequence ID" value="AAA42715.1"/>
    <property type="molecule type" value="Genomic_DNA"/>
</dbReference>
<dbReference type="PIR" id="I45348">
    <property type="entry name" value="I45348"/>
</dbReference>
<dbReference type="SMR" id="P68745"/>
<dbReference type="KEGG" id="vg:22220401"/>
<dbReference type="GO" id="GO:0044166">
    <property type="term" value="C:host cell endoplasmic reticulum lumen"/>
    <property type="evidence" value="ECO:0007669"/>
    <property type="project" value="UniProtKB-SubCell"/>
</dbReference>
<dbReference type="InterPro" id="IPR004848">
    <property type="entry name" value="ASFV_fam_110"/>
</dbReference>
<dbReference type="Pfam" id="PF01639">
    <property type="entry name" value="v110"/>
    <property type="match status" value="1"/>
</dbReference>